<keyword id="KW-0068">Autocatalytic cleavage</keyword>
<keyword id="KW-0227">DNA damage</keyword>
<keyword id="KW-0234">DNA repair</keyword>
<keyword id="KW-0235">DNA replication</keyword>
<keyword id="KW-0238">DNA-binding</keyword>
<keyword id="KW-0378">Hydrolase</keyword>
<keyword id="KW-1185">Reference proteome</keyword>
<keyword id="KW-0678">Repressor</keyword>
<keyword id="KW-0742">SOS response</keyword>
<keyword id="KW-0804">Transcription</keyword>
<keyword id="KW-0805">Transcription regulation</keyword>
<protein>
    <recommendedName>
        <fullName evidence="1">LexA repressor</fullName>
        <ecNumber evidence="1">3.4.21.88</ecNumber>
    </recommendedName>
</protein>
<organism>
    <name type="scientific">Clostridium novyi (strain NT)</name>
    <dbReference type="NCBI Taxonomy" id="386415"/>
    <lineage>
        <taxon>Bacteria</taxon>
        <taxon>Bacillati</taxon>
        <taxon>Bacillota</taxon>
        <taxon>Clostridia</taxon>
        <taxon>Eubacteriales</taxon>
        <taxon>Clostridiaceae</taxon>
        <taxon>Clostridium</taxon>
    </lineage>
</organism>
<sequence>MSRSSEDKQIEIYEFIKEQIIEKGYPPSVREICKGVGLSSTSSVHGHLSKLEKKGLIRRDSTKPRTIEILKEPIVPKEMVNIPILGKVTAGTPILAVENIEDTFPISLNFIPSNKDLFMLKISGESMIDAGILDGDLAIIEKTNTAKNGEIVVALIDNEVTLKRFFKEDKHIRLQPENKNMDPIILEDDSVSIVGKLAGIFRRY</sequence>
<accession>A0Q0N2</accession>
<evidence type="ECO:0000255" key="1">
    <source>
        <dbReference type="HAMAP-Rule" id="MF_00015"/>
    </source>
</evidence>
<dbReference type="EC" id="3.4.21.88" evidence="1"/>
<dbReference type="EMBL" id="CP000382">
    <property type="protein sequence ID" value="ABK61190.1"/>
    <property type="molecule type" value="Genomic_DNA"/>
</dbReference>
<dbReference type="RefSeq" id="WP_011722184.1">
    <property type="nucleotide sequence ID" value="NC_008593.1"/>
</dbReference>
<dbReference type="SMR" id="A0Q0N2"/>
<dbReference type="STRING" id="386415.NT01CX_2111"/>
<dbReference type="MEROPS" id="S24.001"/>
<dbReference type="KEGG" id="cno:NT01CX_2111"/>
<dbReference type="eggNOG" id="COG1974">
    <property type="taxonomic scope" value="Bacteria"/>
</dbReference>
<dbReference type="HOGENOM" id="CLU_066192_45_1_9"/>
<dbReference type="Proteomes" id="UP000008220">
    <property type="component" value="Chromosome"/>
</dbReference>
<dbReference type="GO" id="GO:0003677">
    <property type="term" value="F:DNA binding"/>
    <property type="evidence" value="ECO:0007669"/>
    <property type="project" value="UniProtKB-UniRule"/>
</dbReference>
<dbReference type="GO" id="GO:0004252">
    <property type="term" value="F:serine-type endopeptidase activity"/>
    <property type="evidence" value="ECO:0007669"/>
    <property type="project" value="UniProtKB-UniRule"/>
</dbReference>
<dbReference type="GO" id="GO:0006281">
    <property type="term" value="P:DNA repair"/>
    <property type="evidence" value="ECO:0007669"/>
    <property type="project" value="UniProtKB-UniRule"/>
</dbReference>
<dbReference type="GO" id="GO:0006260">
    <property type="term" value="P:DNA replication"/>
    <property type="evidence" value="ECO:0007669"/>
    <property type="project" value="UniProtKB-UniRule"/>
</dbReference>
<dbReference type="GO" id="GO:0045892">
    <property type="term" value="P:negative regulation of DNA-templated transcription"/>
    <property type="evidence" value="ECO:0007669"/>
    <property type="project" value="UniProtKB-UniRule"/>
</dbReference>
<dbReference type="GO" id="GO:0006508">
    <property type="term" value="P:proteolysis"/>
    <property type="evidence" value="ECO:0007669"/>
    <property type="project" value="InterPro"/>
</dbReference>
<dbReference type="GO" id="GO:0009432">
    <property type="term" value="P:SOS response"/>
    <property type="evidence" value="ECO:0007669"/>
    <property type="project" value="UniProtKB-UniRule"/>
</dbReference>
<dbReference type="CDD" id="cd00090">
    <property type="entry name" value="HTH_ARSR"/>
    <property type="match status" value="1"/>
</dbReference>
<dbReference type="CDD" id="cd06529">
    <property type="entry name" value="S24_LexA-like"/>
    <property type="match status" value="1"/>
</dbReference>
<dbReference type="FunFam" id="1.10.10.10:FF:000009">
    <property type="entry name" value="LexA repressor"/>
    <property type="match status" value="1"/>
</dbReference>
<dbReference type="FunFam" id="2.10.109.10:FF:000001">
    <property type="entry name" value="LexA repressor"/>
    <property type="match status" value="1"/>
</dbReference>
<dbReference type="Gene3D" id="2.10.109.10">
    <property type="entry name" value="Umud Fragment, subunit A"/>
    <property type="match status" value="1"/>
</dbReference>
<dbReference type="Gene3D" id="1.10.10.10">
    <property type="entry name" value="Winged helix-like DNA-binding domain superfamily/Winged helix DNA-binding domain"/>
    <property type="match status" value="1"/>
</dbReference>
<dbReference type="HAMAP" id="MF_00015">
    <property type="entry name" value="LexA"/>
    <property type="match status" value="1"/>
</dbReference>
<dbReference type="InterPro" id="IPR011991">
    <property type="entry name" value="ArsR-like_HTH"/>
</dbReference>
<dbReference type="InterPro" id="IPR006200">
    <property type="entry name" value="LexA"/>
</dbReference>
<dbReference type="InterPro" id="IPR039418">
    <property type="entry name" value="LexA-like"/>
</dbReference>
<dbReference type="InterPro" id="IPR036286">
    <property type="entry name" value="LexA/Signal_pep-like_sf"/>
</dbReference>
<dbReference type="InterPro" id="IPR006199">
    <property type="entry name" value="LexA_DNA-bd_dom"/>
</dbReference>
<dbReference type="InterPro" id="IPR050077">
    <property type="entry name" value="LexA_repressor"/>
</dbReference>
<dbReference type="InterPro" id="IPR006197">
    <property type="entry name" value="Peptidase_S24_LexA"/>
</dbReference>
<dbReference type="InterPro" id="IPR015927">
    <property type="entry name" value="Peptidase_S24_S26A/B/C"/>
</dbReference>
<dbReference type="InterPro" id="IPR036388">
    <property type="entry name" value="WH-like_DNA-bd_sf"/>
</dbReference>
<dbReference type="InterPro" id="IPR036390">
    <property type="entry name" value="WH_DNA-bd_sf"/>
</dbReference>
<dbReference type="NCBIfam" id="TIGR00498">
    <property type="entry name" value="lexA"/>
    <property type="match status" value="1"/>
</dbReference>
<dbReference type="PANTHER" id="PTHR33516">
    <property type="entry name" value="LEXA REPRESSOR"/>
    <property type="match status" value="1"/>
</dbReference>
<dbReference type="PANTHER" id="PTHR33516:SF2">
    <property type="entry name" value="LEXA REPRESSOR-RELATED"/>
    <property type="match status" value="1"/>
</dbReference>
<dbReference type="Pfam" id="PF01726">
    <property type="entry name" value="LexA_DNA_bind"/>
    <property type="match status" value="1"/>
</dbReference>
<dbReference type="Pfam" id="PF00717">
    <property type="entry name" value="Peptidase_S24"/>
    <property type="match status" value="1"/>
</dbReference>
<dbReference type="PRINTS" id="PR00726">
    <property type="entry name" value="LEXASERPTASE"/>
</dbReference>
<dbReference type="SUPFAM" id="SSF51306">
    <property type="entry name" value="LexA/Signal peptidase"/>
    <property type="match status" value="1"/>
</dbReference>
<dbReference type="SUPFAM" id="SSF46785">
    <property type="entry name" value="Winged helix' DNA-binding domain"/>
    <property type="match status" value="1"/>
</dbReference>
<comment type="function">
    <text evidence="1">Represses a number of genes involved in the response to DNA damage (SOS response), including recA and lexA. In the presence of single-stranded DNA, RecA interacts with LexA causing an autocatalytic cleavage which disrupts the DNA-binding part of LexA, leading to derepression of the SOS regulon and eventually DNA repair.</text>
</comment>
<comment type="catalytic activity">
    <reaction evidence="1">
        <text>Hydrolysis of Ala-|-Gly bond in repressor LexA.</text>
        <dbReference type="EC" id="3.4.21.88"/>
    </reaction>
</comment>
<comment type="subunit">
    <text evidence="1">Homodimer.</text>
</comment>
<comment type="similarity">
    <text evidence="1">Belongs to the peptidase S24 family.</text>
</comment>
<proteinExistence type="inferred from homology"/>
<name>LEXA_CLONN</name>
<gene>
    <name evidence="1" type="primary">lexA</name>
    <name type="ordered locus">NT01CX_2111</name>
</gene>
<reference key="1">
    <citation type="journal article" date="2006" name="Nat. Biotechnol.">
        <title>The genome and transcriptomes of the anti-tumor agent Clostridium novyi-NT.</title>
        <authorList>
            <person name="Bettegowda C."/>
            <person name="Huang X."/>
            <person name="Lin J."/>
            <person name="Cheong I."/>
            <person name="Kohli M."/>
            <person name="Szabo S.A."/>
            <person name="Zhang X."/>
            <person name="Diaz L.A. Jr."/>
            <person name="Velculescu V.E."/>
            <person name="Parmigiani G."/>
            <person name="Kinzler K.W."/>
            <person name="Vogelstein B."/>
            <person name="Zhou S."/>
        </authorList>
    </citation>
    <scope>NUCLEOTIDE SEQUENCE [LARGE SCALE GENOMIC DNA]</scope>
    <source>
        <strain>NT</strain>
    </source>
</reference>
<feature type="chain" id="PRO_0000322725" description="LexA repressor">
    <location>
        <begin position="1"/>
        <end position="204"/>
    </location>
</feature>
<feature type="DNA-binding region" description="H-T-H motif" evidence="1">
    <location>
        <begin position="29"/>
        <end position="49"/>
    </location>
</feature>
<feature type="active site" description="For autocatalytic cleavage activity" evidence="1">
    <location>
        <position position="126"/>
    </location>
</feature>
<feature type="active site" description="For autocatalytic cleavage activity" evidence="1">
    <location>
        <position position="163"/>
    </location>
</feature>
<feature type="site" description="Cleavage; by autolysis" evidence="1">
    <location>
        <begin position="90"/>
        <end position="91"/>
    </location>
</feature>